<dbReference type="EC" id="3.4.21.-" evidence="7 11"/>
<dbReference type="EMBL" id="AE014297">
    <property type="protein sequence ID" value="AAF56160.2"/>
    <property type="molecule type" value="Genomic_DNA"/>
</dbReference>
<dbReference type="EMBL" id="AY051638">
    <property type="protein sequence ID" value="AAK93062.1"/>
    <property type="molecule type" value="mRNA"/>
</dbReference>
<dbReference type="RefSeq" id="NP_651168.1">
    <property type="nucleotide sequence ID" value="NM_142911.4"/>
</dbReference>
<dbReference type="SMR" id="Q9VCJ8"/>
<dbReference type="FunCoup" id="Q9VCJ8">
    <property type="interactions" value="103"/>
</dbReference>
<dbReference type="IntAct" id="Q9VCJ8">
    <property type="interactions" value="21"/>
</dbReference>
<dbReference type="STRING" id="7227.FBpp0083832"/>
<dbReference type="MEROPS" id="S01.462"/>
<dbReference type="GlyCosmos" id="Q9VCJ8">
    <property type="glycosylation" value="2 sites, No reported glycans"/>
</dbReference>
<dbReference type="GlyGen" id="Q9VCJ8">
    <property type="glycosylation" value="3 sites"/>
</dbReference>
<dbReference type="PaxDb" id="7227-FBpp0083832"/>
<dbReference type="DNASU" id="42791"/>
<dbReference type="EnsemblMetazoa" id="FBtr0084440">
    <property type="protein sequence ID" value="FBpp0083832"/>
    <property type="gene ID" value="FBgn0039102"/>
</dbReference>
<dbReference type="GeneID" id="42791"/>
<dbReference type="KEGG" id="dme:Dmel_CG16705"/>
<dbReference type="UCSC" id="CG16705-RA">
    <property type="organism name" value="d. melanogaster"/>
</dbReference>
<dbReference type="AGR" id="FB:FBgn0039102"/>
<dbReference type="CTD" id="42791"/>
<dbReference type="FlyBase" id="FBgn0039102">
    <property type="gene designation" value="SPE"/>
</dbReference>
<dbReference type="VEuPathDB" id="VectorBase:FBgn0039102"/>
<dbReference type="eggNOG" id="KOG3627">
    <property type="taxonomic scope" value="Eukaryota"/>
</dbReference>
<dbReference type="GeneTree" id="ENSGT00940000163739"/>
<dbReference type="HOGENOM" id="CLU_006842_0_3_1"/>
<dbReference type="InParanoid" id="Q9VCJ8"/>
<dbReference type="OMA" id="CIHIRDC"/>
<dbReference type="OrthoDB" id="9028152at2759"/>
<dbReference type="PhylomeDB" id="Q9VCJ8"/>
<dbReference type="Reactome" id="R-DME-209442">
    <property type="pathway name" value="Formation of the trans-membrane 'signalling complex'"/>
</dbReference>
<dbReference type="SignaLink" id="Q9VCJ8"/>
<dbReference type="BioGRID-ORCS" id="42791">
    <property type="hits" value="0 hits in 1 CRISPR screen"/>
</dbReference>
<dbReference type="ChiTaRS" id="spen">
    <property type="organism name" value="fly"/>
</dbReference>
<dbReference type="GenomeRNAi" id="42791"/>
<dbReference type="PRO" id="PR:Q9VCJ8"/>
<dbReference type="Proteomes" id="UP000000803">
    <property type="component" value="Chromosome 3R"/>
</dbReference>
<dbReference type="Bgee" id="FBgn0039102">
    <property type="expression patterns" value="Expressed in capitellum (Drosophila) and 84 other cell types or tissues"/>
</dbReference>
<dbReference type="GO" id="GO:0005576">
    <property type="term" value="C:extracellular region"/>
    <property type="evidence" value="ECO:0000304"/>
    <property type="project" value="Reactome"/>
</dbReference>
<dbReference type="GO" id="GO:0005615">
    <property type="term" value="C:extracellular space"/>
    <property type="evidence" value="ECO:0000318"/>
    <property type="project" value="GO_Central"/>
</dbReference>
<dbReference type="GO" id="GO:0046872">
    <property type="term" value="F:metal ion binding"/>
    <property type="evidence" value="ECO:0007669"/>
    <property type="project" value="UniProtKB-KW"/>
</dbReference>
<dbReference type="GO" id="GO:0017171">
    <property type="term" value="F:serine hydrolase activity"/>
    <property type="evidence" value="ECO:0007005"/>
    <property type="project" value="FlyBase"/>
</dbReference>
<dbReference type="GO" id="GO:0004252">
    <property type="term" value="F:serine-type endopeptidase activity"/>
    <property type="evidence" value="ECO:0000314"/>
    <property type="project" value="FlyBase"/>
</dbReference>
<dbReference type="GO" id="GO:0050832">
    <property type="term" value="P:defense response to fungus"/>
    <property type="evidence" value="ECO:0000315"/>
    <property type="project" value="UniProtKB"/>
</dbReference>
<dbReference type="GO" id="GO:0050829">
    <property type="term" value="P:defense response to Gram-negative bacterium"/>
    <property type="evidence" value="ECO:0000315"/>
    <property type="project" value="FlyBase"/>
</dbReference>
<dbReference type="GO" id="GO:0050830">
    <property type="term" value="P:defense response to Gram-positive bacterium"/>
    <property type="evidence" value="ECO:0000314"/>
    <property type="project" value="FlyBase"/>
</dbReference>
<dbReference type="GO" id="GO:0045087">
    <property type="term" value="P:innate immune response"/>
    <property type="evidence" value="ECO:0000315"/>
    <property type="project" value="UniProtKB"/>
</dbReference>
<dbReference type="GO" id="GO:0002804">
    <property type="term" value="P:positive regulation of antifungal peptide production"/>
    <property type="evidence" value="ECO:0000315"/>
    <property type="project" value="UniProtKB"/>
</dbReference>
<dbReference type="GO" id="GO:0002225">
    <property type="term" value="P:positive regulation of antimicrobial peptide production"/>
    <property type="evidence" value="ECO:0000315"/>
    <property type="project" value="FlyBase"/>
</dbReference>
<dbReference type="GO" id="GO:0006965">
    <property type="term" value="P:positive regulation of biosynthetic process of antibacterial peptides active against Gram-positive bacteria"/>
    <property type="evidence" value="ECO:0000315"/>
    <property type="project" value="UniProtKB"/>
</dbReference>
<dbReference type="GO" id="GO:0006508">
    <property type="term" value="P:proteolysis"/>
    <property type="evidence" value="ECO:0000314"/>
    <property type="project" value="FlyBase"/>
</dbReference>
<dbReference type="GO" id="GO:0009620">
    <property type="term" value="P:response to fungus"/>
    <property type="evidence" value="ECO:0007007"/>
    <property type="project" value="FlyBase"/>
</dbReference>
<dbReference type="GO" id="GO:0160032">
    <property type="term" value="P:Toll receptor ligand protein activation cascade"/>
    <property type="evidence" value="ECO:0000314"/>
    <property type="project" value="FlyBase"/>
</dbReference>
<dbReference type="CDD" id="cd00190">
    <property type="entry name" value="Tryp_SPc"/>
    <property type="match status" value="1"/>
</dbReference>
<dbReference type="FunFam" id="2.40.10.10:FF:000028">
    <property type="entry name" value="Serine protease easter"/>
    <property type="match status" value="1"/>
</dbReference>
<dbReference type="FunFam" id="2.40.10.10:FF:000084">
    <property type="entry name" value="Serine protease easter"/>
    <property type="match status" value="1"/>
</dbReference>
<dbReference type="FunFam" id="3.30.1640.30:FF:000002">
    <property type="entry name" value="Spaetzle-processing enzyme"/>
    <property type="match status" value="1"/>
</dbReference>
<dbReference type="Gene3D" id="3.30.1640.30">
    <property type="match status" value="1"/>
</dbReference>
<dbReference type="Gene3D" id="2.40.10.10">
    <property type="entry name" value="Trypsin-like serine proteases"/>
    <property type="match status" value="2"/>
</dbReference>
<dbReference type="InterPro" id="IPR022700">
    <property type="entry name" value="CLIP"/>
</dbReference>
<dbReference type="InterPro" id="IPR038565">
    <property type="entry name" value="CLIP_sf"/>
</dbReference>
<dbReference type="InterPro" id="IPR009003">
    <property type="entry name" value="Peptidase_S1_PA"/>
</dbReference>
<dbReference type="InterPro" id="IPR043504">
    <property type="entry name" value="Peptidase_S1_PA_chymotrypsin"/>
</dbReference>
<dbReference type="InterPro" id="IPR001314">
    <property type="entry name" value="Peptidase_S1A"/>
</dbReference>
<dbReference type="InterPro" id="IPR051487">
    <property type="entry name" value="Ser/Thr_Proteases_Immune/Dev"/>
</dbReference>
<dbReference type="InterPro" id="IPR001254">
    <property type="entry name" value="Trypsin_dom"/>
</dbReference>
<dbReference type="InterPro" id="IPR018114">
    <property type="entry name" value="TRYPSIN_HIS"/>
</dbReference>
<dbReference type="InterPro" id="IPR033116">
    <property type="entry name" value="TRYPSIN_SER"/>
</dbReference>
<dbReference type="PANTHER" id="PTHR24256">
    <property type="entry name" value="TRYPTASE-RELATED"/>
    <property type="match status" value="1"/>
</dbReference>
<dbReference type="Pfam" id="PF12032">
    <property type="entry name" value="CLIP"/>
    <property type="match status" value="1"/>
</dbReference>
<dbReference type="Pfam" id="PF00089">
    <property type="entry name" value="Trypsin"/>
    <property type="match status" value="1"/>
</dbReference>
<dbReference type="PRINTS" id="PR00722">
    <property type="entry name" value="CHYMOTRYPSIN"/>
</dbReference>
<dbReference type="SMART" id="SM00680">
    <property type="entry name" value="CLIP"/>
    <property type="match status" value="1"/>
</dbReference>
<dbReference type="SMART" id="SM00020">
    <property type="entry name" value="Tryp_SPc"/>
    <property type="match status" value="1"/>
</dbReference>
<dbReference type="SUPFAM" id="SSF50494">
    <property type="entry name" value="Trypsin-like serine proteases"/>
    <property type="match status" value="1"/>
</dbReference>
<dbReference type="PROSITE" id="PS51888">
    <property type="entry name" value="CLIP"/>
    <property type="match status" value="1"/>
</dbReference>
<dbReference type="PROSITE" id="PS50240">
    <property type="entry name" value="TRYPSIN_DOM"/>
    <property type="match status" value="1"/>
</dbReference>
<dbReference type="PROSITE" id="PS00134">
    <property type="entry name" value="TRYPSIN_HIS"/>
    <property type="match status" value="1"/>
</dbReference>
<dbReference type="PROSITE" id="PS00135">
    <property type="entry name" value="TRYPSIN_SER"/>
    <property type="match status" value="1"/>
</dbReference>
<evidence type="ECO:0000250" key="1">
    <source>
        <dbReference type="UniProtKB" id="O97366"/>
    </source>
</evidence>
<evidence type="ECO:0000250" key="2">
    <source>
        <dbReference type="UniProtKB" id="Q9VB68"/>
    </source>
</evidence>
<evidence type="ECO:0000255" key="3"/>
<evidence type="ECO:0000255" key="4">
    <source>
        <dbReference type="PROSITE-ProRule" id="PRU00274"/>
    </source>
</evidence>
<evidence type="ECO:0000255" key="5">
    <source>
        <dbReference type="PROSITE-ProRule" id="PRU00498"/>
    </source>
</evidence>
<evidence type="ECO:0000255" key="6">
    <source>
        <dbReference type="PROSITE-ProRule" id="PRU01236"/>
    </source>
</evidence>
<evidence type="ECO:0000269" key="7">
    <source>
    </source>
</evidence>
<evidence type="ECO:0000269" key="8">
    <source>
    </source>
</evidence>
<evidence type="ECO:0000269" key="9">
    <source>
    </source>
</evidence>
<evidence type="ECO:0000269" key="10">
    <source>
    </source>
</evidence>
<evidence type="ECO:0000269" key="11">
    <source>
    </source>
</evidence>
<evidence type="ECO:0000303" key="12">
    <source>
    </source>
</evidence>
<evidence type="ECO:0000303" key="13">
    <source>
    </source>
</evidence>
<evidence type="ECO:0000305" key="14"/>
<evidence type="ECO:0000305" key="15">
    <source>
    </source>
</evidence>
<evidence type="ECO:0000312" key="16">
    <source>
        <dbReference type="EMBL" id="AAK93062.1"/>
    </source>
</evidence>
<evidence type="ECO:0000312" key="17">
    <source>
        <dbReference type="FlyBase" id="FBgn0039102"/>
    </source>
</evidence>
<evidence type="ECO:0000312" key="18">
    <source>
        <dbReference type="Proteomes" id="UP000000803"/>
    </source>
</evidence>
<feature type="signal peptide" evidence="3">
    <location>
        <begin position="1"/>
        <end position="27"/>
    </location>
</feature>
<feature type="chain" id="PRO_5010149006" description="Spaetzle-processing enzyme light chain" evidence="15">
    <location>
        <begin position="28"/>
        <end position="134"/>
    </location>
</feature>
<feature type="chain" id="PRO_0000443328" description="Spaetzle-processing enzyme heavy chain" evidence="15">
    <location>
        <begin position="135"/>
        <end position="400"/>
    </location>
</feature>
<feature type="domain" description="Clip" evidence="6">
    <location>
        <begin position="34"/>
        <end position="94"/>
    </location>
</feature>
<feature type="domain" description="Peptidase S1" evidence="4">
    <location>
        <begin position="135"/>
        <end position="399"/>
    </location>
</feature>
<feature type="active site" description="Charge relay system" evidence="4">
    <location>
        <position position="181"/>
    </location>
</feature>
<feature type="active site" description="Charge relay system" evidence="4">
    <location>
        <position position="249"/>
    </location>
</feature>
<feature type="active site" description="Charge relay system" evidence="4">
    <location>
        <position position="346"/>
    </location>
</feature>
<feature type="binding site" evidence="1">
    <location>
        <position position="202"/>
    </location>
    <ligand>
        <name>Ca(2+)</name>
        <dbReference type="ChEBI" id="CHEBI:29108"/>
    </ligand>
</feature>
<feature type="binding site" evidence="1">
    <location>
        <position position="204"/>
    </location>
    <ligand>
        <name>Ca(2+)</name>
        <dbReference type="ChEBI" id="CHEBI:29108"/>
    </ligand>
</feature>
<feature type="binding site" evidence="1">
    <location>
        <position position="207"/>
    </location>
    <ligand>
        <name>Ca(2+)</name>
        <dbReference type="ChEBI" id="CHEBI:29108"/>
    </ligand>
</feature>
<feature type="binding site" evidence="1">
    <location>
        <position position="210"/>
    </location>
    <ligand>
        <name>Ca(2+)</name>
        <dbReference type="ChEBI" id="CHEBI:29108"/>
    </ligand>
</feature>
<feature type="site" description="Cleavage" evidence="7">
    <location>
        <begin position="134"/>
        <end position="135"/>
    </location>
</feature>
<feature type="glycosylation site" description="N-linked (GlcNAc...) asparagine" evidence="5">
    <location>
        <position position="140"/>
    </location>
</feature>
<feature type="glycosylation site" description="N-linked (GlcNAc...) asparagine" evidence="5">
    <location>
        <position position="311"/>
    </location>
</feature>
<feature type="disulfide bond" evidence="6">
    <location>
        <begin position="35"/>
        <end position="93"/>
    </location>
</feature>
<feature type="disulfide bond" evidence="6">
    <location>
        <begin position="46"/>
        <end position="77"/>
    </location>
</feature>
<feature type="disulfide bond" evidence="6">
    <location>
        <begin position="52"/>
        <end position="94"/>
    </location>
</feature>
<feature type="disulfide bond" description="Interchain (between light and heavy chains)" evidence="2">
    <location>
        <begin position="127"/>
        <end position="269"/>
    </location>
</feature>
<feature type="disulfide bond" evidence="4">
    <location>
        <begin position="166"/>
        <end position="182"/>
    </location>
</feature>
<feature type="disulfide bond" evidence="2">
    <location>
        <begin position="211"/>
        <end position="221"/>
    </location>
</feature>
<feature type="disulfide bond" evidence="4">
    <location>
        <begin position="315"/>
        <end position="332"/>
    </location>
</feature>
<feature type="disulfide bond" evidence="4">
    <location>
        <begin position="342"/>
        <end position="375"/>
    </location>
</feature>
<feature type="mutagenesis site" description="Inhibits zymogen cleavage and thus activation and spz processing." evidence="7">
    <original>R</original>
    <variation>A</variation>
    <location>
        <position position="134"/>
    </location>
</feature>
<accession>Q9VCJ8</accession>
<keyword id="KW-0106">Calcium</keyword>
<keyword id="KW-1015">Disulfide bond</keyword>
<keyword id="KW-0325">Glycoprotein</keyword>
<keyword id="KW-0378">Hydrolase</keyword>
<keyword id="KW-0391">Immunity</keyword>
<keyword id="KW-0399">Innate immunity</keyword>
<keyword id="KW-0479">Metal-binding</keyword>
<keyword id="KW-0645">Protease</keyword>
<keyword id="KW-1185">Reference proteome</keyword>
<keyword id="KW-0964">Secreted</keyword>
<keyword id="KW-0720">Serine protease</keyword>
<keyword id="KW-0732">Signal</keyword>
<keyword id="KW-0865">Zymogen</keyword>
<proteinExistence type="evidence at protein level"/>
<gene>
    <name evidence="17" type="primary">SPE</name>
    <name evidence="17" type="synonym">c-SP4</name>
    <name evidence="17" type="synonym">SP4</name>
    <name evidence="17" type="ORF">CG16705</name>
</gene>
<protein>
    <recommendedName>
        <fullName evidence="13">Spaetzle-processing enzyme</fullName>
        <ecNumber evidence="7 11">3.4.21.-</ecNumber>
    </recommendedName>
    <alternativeName>
        <fullName evidence="12">Spatzle-processing enzyme</fullName>
    </alternativeName>
    <component>
        <recommendedName>
            <fullName evidence="14">Spaetzle-processing enzyme light chain</fullName>
        </recommendedName>
    </component>
    <component>
        <recommendedName>
            <fullName evidence="14">Spaetzle-processing enzyme heavy chain</fullName>
        </recommendedName>
    </component>
</protein>
<reference evidence="18" key="1">
    <citation type="journal article" date="2000" name="Science">
        <title>The genome sequence of Drosophila melanogaster.</title>
        <authorList>
            <person name="Adams M.D."/>
            <person name="Celniker S.E."/>
            <person name="Holt R.A."/>
            <person name="Evans C.A."/>
            <person name="Gocayne J.D."/>
            <person name="Amanatides P.G."/>
            <person name="Scherer S.E."/>
            <person name="Li P.W."/>
            <person name="Hoskins R.A."/>
            <person name="Galle R.F."/>
            <person name="George R.A."/>
            <person name="Lewis S.E."/>
            <person name="Richards S."/>
            <person name="Ashburner M."/>
            <person name="Henderson S.N."/>
            <person name="Sutton G.G."/>
            <person name="Wortman J.R."/>
            <person name="Yandell M.D."/>
            <person name="Zhang Q."/>
            <person name="Chen L.X."/>
            <person name="Brandon R.C."/>
            <person name="Rogers Y.-H.C."/>
            <person name="Blazej R.G."/>
            <person name="Champe M."/>
            <person name="Pfeiffer B.D."/>
            <person name="Wan K.H."/>
            <person name="Doyle C."/>
            <person name="Baxter E.G."/>
            <person name="Helt G."/>
            <person name="Nelson C.R."/>
            <person name="Miklos G.L.G."/>
            <person name="Abril J.F."/>
            <person name="Agbayani A."/>
            <person name="An H.-J."/>
            <person name="Andrews-Pfannkoch C."/>
            <person name="Baldwin D."/>
            <person name="Ballew R.M."/>
            <person name="Basu A."/>
            <person name="Baxendale J."/>
            <person name="Bayraktaroglu L."/>
            <person name="Beasley E.M."/>
            <person name="Beeson K.Y."/>
            <person name="Benos P.V."/>
            <person name="Berman B.P."/>
            <person name="Bhandari D."/>
            <person name="Bolshakov S."/>
            <person name="Borkova D."/>
            <person name="Botchan M.R."/>
            <person name="Bouck J."/>
            <person name="Brokstein P."/>
            <person name="Brottier P."/>
            <person name="Burtis K.C."/>
            <person name="Busam D.A."/>
            <person name="Butler H."/>
            <person name="Cadieu E."/>
            <person name="Center A."/>
            <person name="Chandra I."/>
            <person name="Cherry J.M."/>
            <person name="Cawley S."/>
            <person name="Dahlke C."/>
            <person name="Davenport L.B."/>
            <person name="Davies P."/>
            <person name="de Pablos B."/>
            <person name="Delcher A."/>
            <person name="Deng Z."/>
            <person name="Mays A.D."/>
            <person name="Dew I."/>
            <person name="Dietz S.M."/>
            <person name="Dodson K."/>
            <person name="Doup L.E."/>
            <person name="Downes M."/>
            <person name="Dugan-Rocha S."/>
            <person name="Dunkov B.C."/>
            <person name="Dunn P."/>
            <person name="Durbin K.J."/>
            <person name="Evangelista C.C."/>
            <person name="Ferraz C."/>
            <person name="Ferriera S."/>
            <person name="Fleischmann W."/>
            <person name="Fosler C."/>
            <person name="Gabrielian A.E."/>
            <person name="Garg N.S."/>
            <person name="Gelbart W.M."/>
            <person name="Glasser K."/>
            <person name="Glodek A."/>
            <person name="Gong F."/>
            <person name="Gorrell J.H."/>
            <person name="Gu Z."/>
            <person name="Guan P."/>
            <person name="Harris M."/>
            <person name="Harris N.L."/>
            <person name="Harvey D.A."/>
            <person name="Heiman T.J."/>
            <person name="Hernandez J.R."/>
            <person name="Houck J."/>
            <person name="Hostin D."/>
            <person name="Houston K.A."/>
            <person name="Howland T.J."/>
            <person name="Wei M.-H."/>
            <person name="Ibegwam C."/>
            <person name="Jalali M."/>
            <person name="Kalush F."/>
            <person name="Karpen G.H."/>
            <person name="Ke Z."/>
            <person name="Kennison J.A."/>
            <person name="Ketchum K.A."/>
            <person name="Kimmel B.E."/>
            <person name="Kodira C.D."/>
            <person name="Kraft C.L."/>
            <person name="Kravitz S."/>
            <person name="Kulp D."/>
            <person name="Lai Z."/>
            <person name="Lasko P."/>
            <person name="Lei Y."/>
            <person name="Levitsky A.A."/>
            <person name="Li J.H."/>
            <person name="Li Z."/>
            <person name="Liang Y."/>
            <person name="Lin X."/>
            <person name="Liu X."/>
            <person name="Mattei B."/>
            <person name="McIntosh T.C."/>
            <person name="McLeod M.P."/>
            <person name="McPherson D."/>
            <person name="Merkulov G."/>
            <person name="Milshina N.V."/>
            <person name="Mobarry C."/>
            <person name="Morris J."/>
            <person name="Moshrefi A."/>
            <person name="Mount S.M."/>
            <person name="Moy M."/>
            <person name="Murphy B."/>
            <person name="Murphy L."/>
            <person name="Muzny D.M."/>
            <person name="Nelson D.L."/>
            <person name="Nelson D.R."/>
            <person name="Nelson K.A."/>
            <person name="Nixon K."/>
            <person name="Nusskern D.R."/>
            <person name="Pacleb J.M."/>
            <person name="Palazzolo M."/>
            <person name="Pittman G.S."/>
            <person name="Pan S."/>
            <person name="Pollard J."/>
            <person name="Puri V."/>
            <person name="Reese M.G."/>
            <person name="Reinert K."/>
            <person name="Remington K."/>
            <person name="Saunders R.D.C."/>
            <person name="Scheeler F."/>
            <person name="Shen H."/>
            <person name="Shue B.C."/>
            <person name="Siden-Kiamos I."/>
            <person name="Simpson M."/>
            <person name="Skupski M.P."/>
            <person name="Smith T.J."/>
            <person name="Spier E."/>
            <person name="Spradling A.C."/>
            <person name="Stapleton M."/>
            <person name="Strong R."/>
            <person name="Sun E."/>
            <person name="Svirskas R."/>
            <person name="Tector C."/>
            <person name="Turner R."/>
            <person name="Venter E."/>
            <person name="Wang A.H."/>
            <person name="Wang X."/>
            <person name="Wang Z.-Y."/>
            <person name="Wassarman D.A."/>
            <person name="Weinstock G.M."/>
            <person name="Weissenbach J."/>
            <person name="Williams S.M."/>
            <person name="Woodage T."/>
            <person name="Worley K.C."/>
            <person name="Wu D."/>
            <person name="Yang S."/>
            <person name="Yao Q.A."/>
            <person name="Ye J."/>
            <person name="Yeh R.-F."/>
            <person name="Zaveri J.S."/>
            <person name="Zhan M."/>
            <person name="Zhang G."/>
            <person name="Zhao Q."/>
            <person name="Zheng L."/>
            <person name="Zheng X.H."/>
            <person name="Zhong F.N."/>
            <person name="Zhong W."/>
            <person name="Zhou X."/>
            <person name="Zhu S.C."/>
            <person name="Zhu X."/>
            <person name="Smith H.O."/>
            <person name="Gibbs R.A."/>
            <person name="Myers E.W."/>
            <person name="Rubin G.M."/>
            <person name="Venter J.C."/>
        </authorList>
    </citation>
    <scope>NUCLEOTIDE SEQUENCE [LARGE SCALE GENOMIC DNA]</scope>
    <source>
        <strain evidence="18">Berkeley</strain>
    </source>
</reference>
<reference evidence="18" key="2">
    <citation type="journal article" date="2002" name="Genome Biol.">
        <title>Annotation of the Drosophila melanogaster euchromatic genome: a systematic review.</title>
        <authorList>
            <person name="Misra S."/>
            <person name="Crosby M.A."/>
            <person name="Mungall C.J."/>
            <person name="Matthews B.B."/>
            <person name="Campbell K.S."/>
            <person name="Hradecky P."/>
            <person name="Huang Y."/>
            <person name="Kaminker J.S."/>
            <person name="Millburn G.H."/>
            <person name="Prochnik S.E."/>
            <person name="Smith C.D."/>
            <person name="Tupy J.L."/>
            <person name="Whitfield E.J."/>
            <person name="Bayraktaroglu L."/>
            <person name="Berman B.P."/>
            <person name="Bettencourt B.R."/>
            <person name="Celniker S.E."/>
            <person name="de Grey A.D.N.J."/>
            <person name="Drysdale R.A."/>
            <person name="Harris N.L."/>
            <person name="Richter J."/>
            <person name="Russo S."/>
            <person name="Schroeder A.J."/>
            <person name="Shu S.Q."/>
            <person name="Stapleton M."/>
            <person name="Yamada C."/>
            <person name="Ashburner M."/>
            <person name="Gelbart W.M."/>
            <person name="Rubin G.M."/>
            <person name="Lewis S.E."/>
        </authorList>
    </citation>
    <scope>GENOME REANNOTATION</scope>
    <source>
        <strain evidence="18">Berkeley</strain>
    </source>
</reference>
<reference evidence="16" key="3">
    <citation type="journal article" date="2002" name="Genome Biol.">
        <title>A Drosophila full-length cDNA resource.</title>
        <authorList>
            <person name="Stapleton M."/>
            <person name="Carlson J.W."/>
            <person name="Brokstein P."/>
            <person name="Yu C."/>
            <person name="Champe M."/>
            <person name="George R.A."/>
            <person name="Guarin H."/>
            <person name="Kronmiller B."/>
            <person name="Pacleb J.M."/>
            <person name="Park S."/>
            <person name="Wan K.H."/>
            <person name="Rubin G.M."/>
            <person name="Celniker S.E."/>
        </authorList>
    </citation>
    <scope>NUCLEOTIDE SEQUENCE [LARGE SCALE MRNA]</scope>
    <source>
        <strain evidence="16">Berkeley</strain>
        <tissue evidence="16">Head</tissue>
    </source>
</reference>
<reference evidence="14" key="4">
    <citation type="journal article" date="2006" name="Curr. Biol.">
        <title>Drosophila immunity: a large-scale in vivo RNAi screen identifies five serine proteases required for Toll activation.</title>
        <authorList>
            <person name="Kambris Z."/>
            <person name="Brun S."/>
            <person name="Jang I.H."/>
            <person name="Nam H.J."/>
            <person name="Romeo Y."/>
            <person name="Takahashi K."/>
            <person name="Lee W.J."/>
            <person name="Ueda R."/>
            <person name="Lemaitre B."/>
        </authorList>
    </citation>
    <scope>FUNCTION</scope>
    <scope>DISRUPTION PHENOTYPE</scope>
</reference>
<reference evidence="14" key="5">
    <citation type="journal article" date="2006" name="Dev. Cell">
        <title>A Spatzle-processing enzyme required for toll signaling activation in Drosophila innate immunity.</title>
        <authorList>
            <person name="Jang I.H."/>
            <person name="Chosa N."/>
            <person name="Kim S.H."/>
            <person name="Nam H.J."/>
            <person name="Lemaitre B."/>
            <person name="Ochiai M."/>
            <person name="Kambris Z."/>
            <person name="Brun S."/>
            <person name="Hashimoto C."/>
            <person name="Ashida M."/>
            <person name="Brey P.T."/>
            <person name="Lee W.J."/>
        </authorList>
    </citation>
    <scope>FUNCTION</scope>
    <scope>CATALYTIC ACTIVITY</scope>
    <scope>INDUCTION</scope>
    <scope>DISRUPTION PHENOTYPE</scope>
    <scope>MUTAGENESIS OF ARG-134</scope>
    <scope>PROTEOLYTIC CLEAVAGE</scope>
</reference>
<reference evidence="14" key="6">
    <citation type="journal article" date="2006" name="FEBS Lett.">
        <title>Expression and regulation of Spaetzle-processing enzyme in Drosophila.</title>
        <authorList>
            <person name="Mulinari S."/>
            <person name="Haecker U."/>
            <person name="Castillejo-Lopez C."/>
        </authorList>
    </citation>
    <scope>FUNCTION</scope>
    <scope>DEVELOPMENTAL STAGE</scope>
    <scope>INDUCTION</scope>
    <scope>DISRUPTION PHENOTYPE</scope>
</reference>
<reference evidence="14" key="7">
    <citation type="journal article" date="2008" name="Nat. Immunol.">
        <title>Sensing of 'danger signals' and pathogen-associated molecular patterns defines binary signaling pathways 'upstream' of Toll.</title>
        <authorList>
            <person name="El Chamy L."/>
            <person name="Leclerc V."/>
            <person name="Caldelari I."/>
            <person name="Reichhart J.M."/>
        </authorList>
    </citation>
    <scope>FUNCTION</scope>
</reference>
<reference evidence="14" key="8">
    <citation type="journal article" date="2016" name="Cell Struct. Funct.">
        <title>Spaetzle-processing enzyme-independent activation of the toll pathway in Drosophila innate immunity.</title>
        <authorList>
            <person name="Yamamoto-Hino M."/>
            <person name="Goto S."/>
        </authorList>
    </citation>
    <scope>FUNCTION</scope>
    <scope>CATALYTIC ACTIVITY</scope>
    <scope>DISRUPTION PHENOTYPE</scope>
</reference>
<sequence length="400" mass="43947">MASTERNFLLLSLVVSALSGLVHRSDAAEISFGSCTPQQSDERGQCVHITSCPYLANLLMVEPKTPAQRILLSKSQCGLDNRVEGLVNRILVCCPQSMRGNIMDSEPTPSTRDALQQGDVLPGNDVCGFLFADRIFGGTNTTLWEFPWMVLLQYKKLFSETYTFNCGGALLNSRYVLTAGHCLASRELDKSGAVLHSVRLGEWDTRTDPDCTTQMNGQRICAPKHIDIEVEKGIIHEMYAPNSVDQRNDIALVRLKRIVSYTDYVRPICLPTDGLVQNNFVDYGMDVAGWGLTENMQPSAIKLKITVNVWNLTSCQEKYSSFKVKLDDSQMCAGGQLGVDTCGGDSGGPLMVPISTGGRDVFYIAGVTSYGTKPCGLKGWPGVYTRTGAFIDWIKQKLEP</sequence>
<name>SPE_DROME</name>
<organism evidence="18">
    <name type="scientific">Drosophila melanogaster</name>
    <name type="common">Fruit fly</name>
    <dbReference type="NCBI Taxonomy" id="7227"/>
    <lineage>
        <taxon>Eukaryota</taxon>
        <taxon>Metazoa</taxon>
        <taxon>Ecdysozoa</taxon>
        <taxon>Arthropoda</taxon>
        <taxon>Hexapoda</taxon>
        <taxon>Insecta</taxon>
        <taxon>Pterygota</taxon>
        <taxon>Neoptera</taxon>
        <taxon>Endopterygota</taxon>
        <taxon>Diptera</taxon>
        <taxon>Brachycera</taxon>
        <taxon>Muscomorpha</taxon>
        <taxon>Ephydroidea</taxon>
        <taxon>Drosophilidae</taxon>
        <taxon>Drosophila</taxon>
        <taxon>Sophophora</taxon>
    </lineage>
</organism>
<comment type="function">
    <text evidence="7 8 9 10 11">Endopeptidase which plays a key role in innate immunity by cleaving Tl ligand spz and thereby activating the Toll pathway in response to fungal and Gram-positive bacterial infections (PubMed:16399077, PubMed:16631589, PubMed:16996061, PubMed:18724373, PubMed:26843333). Acts downstream of pathogen recognition receptors PGRP-SA and GNBP1 and protease grass in response to Gram-positive bacterial infection (PubMed:16399077). Acts downstream of protease psh in response to fungal infection (PubMed:16399077).</text>
</comment>
<comment type="subunit">
    <text evidence="15">In the active form, heterodimer of a light chain and a heavy chain; disulfide-linked.</text>
</comment>
<comment type="subcellular location">
    <subcellularLocation>
        <location evidence="14">Secreted</location>
    </subcellularLocation>
    <text evidence="14">Probably secreted in the hemolymph.</text>
</comment>
<comment type="developmental stage">
    <text evidence="9">In embryogenesis, expressed from stage 11 at the posterior tip of the germ-band; during germline retraction, expressed both ventrally and dorsally; expressed in the developing fat body and lymph nodes. In larvae, expressed in the fat body and in mature hemocytes with weak expression in the lymph glands.</text>
</comment>
<comment type="induction">
    <text evidence="7 9">Up-regulated in response to fungal and Gram-positive bacterial infections.</text>
</comment>
<comment type="domain">
    <text evidence="6">The clip domain consists of 35-55 residues which are 'knitted' together usually by 3 conserved disulfide bonds forming a clip-like compact structure.</text>
</comment>
<comment type="PTM">
    <text evidence="7 15">Proteolytically cleaved in response to Gram-negative bacterial or fungal infection; processing is likely to result in its activation (PubMed:16399077). Cleavage produces a light chain containing the CLIP domain and a catalytic heavy chain which remain covalently associated through an interchain disulfide bond (Probable).</text>
</comment>
<comment type="disruption phenotype">
    <text evidence="7 8 9 11">In larvae infected with Gram-positive bacteria, fails to induce the expression of the Toll pathway-activated anti-fungal peptide Drs (PubMed:26843333). siRNA-mediated knockdown results in increased susceptibility to fungal and Gram-positive bacterial infections, failure to cleave spz and to induce the expression of the antifungal peptide Drs (PubMed:16399077, PubMed:16996061). RNAi-mediated knockdown in the fat body causes increased susceptibility to fungal and Gram-positive bacterial infections and failure to induce the expression of the antifungal peptide Drs (PubMed:16631589).</text>
</comment>
<comment type="similarity">
    <text evidence="6">Belongs to the peptidase S1 family. CLIP subfamily.</text>
</comment>
<comment type="caution">
    <text evidence="14">It is not clear if the light chain is degraded after cleavage.</text>
</comment>